<reference key="1">
    <citation type="submission" date="2007-06" db="EMBL/GenBank/DDBJ databases">
        <authorList>
            <person name="Dodson R.J."/>
            <person name="Harkins D."/>
            <person name="Paulsen I.T."/>
        </authorList>
    </citation>
    <scope>NUCLEOTIDE SEQUENCE [LARGE SCALE GENOMIC DNA]</scope>
    <source>
        <strain>DSM 24068 / PA7</strain>
    </source>
</reference>
<comment type="function">
    <text evidence="1">One of the essential components for the initiation of protein synthesis. Stabilizes the binding of IF-2 and IF-3 on the 30S subunit to which N-formylmethionyl-tRNA(fMet) subsequently binds. Helps modulate mRNA selection, yielding the 30S pre-initiation complex (PIC). Upon addition of the 50S ribosomal subunit IF-1, IF-2 and IF-3 are released leaving the mature 70S translation initiation complex.</text>
</comment>
<comment type="subunit">
    <text evidence="1">Component of the 30S ribosomal translation pre-initiation complex which assembles on the 30S ribosome in the order IF-2 and IF-3, IF-1 and N-formylmethionyl-tRNA(fMet); mRNA recruitment can occur at any time during PIC assembly.</text>
</comment>
<comment type="subcellular location">
    <subcellularLocation>
        <location evidence="1">Cytoplasm</location>
    </subcellularLocation>
</comment>
<comment type="similarity">
    <text evidence="1">Belongs to the IF-1 family.</text>
</comment>
<dbReference type="EMBL" id="CP000744">
    <property type="protein sequence ID" value="ABR81464.1"/>
    <property type="molecule type" value="Genomic_DNA"/>
</dbReference>
<dbReference type="RefSeq" id="WP_002553999.1">
    <property type="nucleotide sequence ID" value="NC_009656.1"/>
</dbReference>
<dbReference type="SMR" id="A6V4G7"/>
<dbReference type="GeneID" id="98638452"/>
<dbReference type="KEGG" id="pap:PSPA7_2588"/>
<dbReference type="HOGENOM" id="CLU_151267_1_0_6"/>
<dbReference type="Proteomes" id="UP000001582">
    <property type="component" value="Chromosome"/>
</dbReference>
<dbReference type="GO" id="GO:0005829">
    <property type="term" value="C:cytosol"/>
    <property type="evidence" value="ECO:0007669"/>
    <property type="project" value="TreeGrafter"/>
</dbReference>
<dbReference type="GO" id="GO:0043022">
    <property type="term" value="F:ribosome binding"/>
    <property type="evidence" value="ECO:0007669"/>
    <property type="project" value="UniProtKB-UniRule"/>
</dbReference>
<dbReference type="GO" id="GO:0019843">
    <property type="term" value="F:rRNA binding"/>
    <property type="evidence" value="ECO:0007669"/>
    <property type="project" value="UniProtKB-UniRule"/>
</dbReference>
<dbReference type="GO" id="GO:0003743">
    <property type="term" value="F:translation initiation factor activity"/>
    <property type="evidence" value="ECO:0007669"/>
    <property type="project" value="UniProtKB-UniRule"/>
</dbReference>
<dbReference type="CDD" id="cd04451">
    <property type="entry name" value="S1_IF1"/>
    <property type="match status" value="1"/>
</dbReference>
<dbReference type="FunFam" id="2.40.50.140:FF:000002">
    <property type="entry name" value="Translation initiation factor IF-1"/>
    <property type="match status" value="1"/>
</dbReference>
<dbReference type="Gene3D" id="2.40.50.140">
    <property type="entry name" value="Nucleic acid-binding proteins"/>
    <property type="match status" value="1"/>
</dbReference>
<dbReference type="HAMAP" id="MF_00075">
    <property type="entry name" value="IF_1"/>
    <property type="match status" value="1"/>
</dbReference>
<dbReference type="InterPro" id="IPR012340">
    <property type="entry name" value="NA-bd_OB-fold"/>
</dbReference>
<dbReference type="InterPro" id="IPR006196">
    <property type="entry name" value="RNA-binding_domain_S1_IF1"/>
</dbReference>
<dbReference type="InterPro" id="IPR003029">
    <property type="entry name" value="S1_domain"/>
</dbReference>
<dbReference type="InterPro" id="IPR004368">
    <property type="entry name" value="TIF_IF1"/>
</dbReference>
<dbReference type="NCBIfam" id="TIGR00008">
    <property type="entry name" value="infA"/>
    <property type="match status" value="1"/>
</dbReference>
<dbReference type="PANTHER" id="PTHR33370">
    <property type="entry name" value="TRANSLATION INITIATION FACTOR IF-1, CHLOROPLASTIC"/>
    <property type="match status" value="1"/>
</dbReference>
<dbReference type="PANTHER" id="PTHR33370:SF1">
    <property type="entry name" value="TRANSLATION INITIATION FACTOR IF-1, CHLOROPLASTIC"/>
    <property type="match status" value="1"/>
</dbReference>
<dbReference type="Pfam" id="PF01176">
    <property type="entry name" value="eIF-1a"/>
    <property type="match status" value="1"/>
</dbReference>
<dbReference type="SMART" id="SM00316">
    <property type="entry name" value="S1"/>
    <property type="match status" value="1"/>
</dbReference>
<dbReference type="SUPFAM" id="SSF50249">
    <property type="entry name" value="Nucleic acid-binding proteins"/>
    <property type="match status" value="1"/>
</dbReference>
<dbReference type="PROSITE" id="PS50832">
    <property type="entry name" value="S1_IF1_TYPE"/>
    <property type="match status" value="1"/>
</dbReference>
<evidence type="ECO:0000255" key="1">
    <source>
        <dbReference type="HAMAP-Rule" id="MF_00075"/>
    </source>
</evidence>
<accession>A6V4G7</accession>
<protein>
    <recommendedName>
        <fullName evidence="1">Translation initiation factor IF-1</fullName>
    </recommendedName>
</protein>
<name>IF1_PSEP7</name>
<gene>
    <name evidence="1" type="primary">infA</name>
    <name type="ordered locus">PSPA7_2588</name>
</gene>
<proteinExistence type="inferred from homology"/>
<feature type="chain" id="PRO_0000338887" description="Translation initiation factor IF-1">
    <location>
        <begin position="1"/>
        <end position="72"/>
    </location>
</feature>
<feature type="domain" description="S1-like" evidence="1">
    <location>
        <begin position="1"/>
        <end position="72"/>
    </location>
</feature>
<organism>
    <name type="scientific">Pseudomonas paraeruginosa (strain DSM 24068 / PA7)</name>
    <name type="common">Pseudomonas aeruginosa (strain PA7)</name>
    <dbReference type="NCBI Taxonomy" id="381754"/>
    <lineage>
        <taxon>Bacteria</taxon>
        <taxon>Pseudomonadati</taxon>
        <taxon>Pseudomonadota</taxon>
        <taxon>Gammaproteobacteria</taxon>
        <taxon>Pseudomonadales</taxon>
        <taxon>Pseudomonadaceae</taxon>
        <taxon>Pseudomonas</taxon>
        <taxon>Pseudomonas paraeruginosa</taxon>
    </lineage>
</organism>
<sequence length="72" mass="8303">MSKEDSFEMEGTVVDTLPNTMFRVELENGHVVTAHISGKMRKNYIRILTGDKVRVELTPYDLSKGRITYRAR</sequence>
<keyword id="KW-0963">Cytoplasm</keyword>
<keyword id="KW-0396">Initiation factor</keyword>
<keyword id="KW-0648">Protein biosynthesis</keyword>
<keyword id="KW-0694">RNA-binding</keyword>
<keyword id="KW-0699">rRNA-binding</keyword>